<gene>
    <name type="primary">Pde10a</name>
</gene>
<keyword id="KW-0021">Allosteric enzyme</keyword>
<keyword id="KW-0025">Alternative splicing</keyword>
<keyword id="KW-0114">cAMP</keyword>
<keyword id="KW-0116">cAMP-binding</keyword>
<keyword id="KW-0140">cGMP</keyword>
<keyword id="KW-0142">cGMP-binding</keyword>
<keyword id="KW-0963">Cytoplasm</keyword>
<keyword id="KW-0378">Hydrolase</keyword>
<keyword id="KW-0479">Metal-binding</keyword>
<keyword id="KW-0547">Nucleotide-binding</keyword>
<keyword id="KW-1185">Reference proteome</keyword>
<keyword id="KW-0677">Repeat</keyword>
<organism>
    <name type="scientific">Mus musculus</name>
    <name type="common">Mouse</name>
    <dbReference type="NCBI Taxonomy" id="10090"/>
    <lineage>
        <taxon>Eukaryota</taxon>
        <taxon>Metazoa</taxon>
        <taxon>Chordata</taxon>
        <taxon>Craniata</taxon>
        <taxon>Vertebrata</taxon>
        <taxon>Euteleostomi</taxon>
        <taxon>Mammalia</taxon>
        <taxon>Eutheria</taxon>
        <taxon>Euarchontoglires</taxon>
        <taxon>Glires</taxon>
        <taxon>Rodentia</taxon>
        <taxon>Myomorpha</taxon>
        <taxon>Muroidea</taxon>
        <taxon>Muridae</taxon>
        <taxon>Murinae</taxon>
        <taxon>Mus</taxon>
        <taxon>Mus</taxon>
    </lineage>
</organism>
<feature type="chain" id="PRO_0000355558" description="cAMP and cAMP-inhibited cGMP 3',5'-cyclic phosphodiesterase 10A">
    <location>
        <begin position="1"/>
        <end position="790"/>
    </location>
</feature>
<feature type="domain" description="PDEase" evidence="3">
    <location>
        <begin position="446"/>
        <end position="763"/>
    </location>
</feature>
<feature type="region of interest" description="Disordered" evidence="4">
    <location>
        <begin position="768"/>
        <end position="790"/>
    </location>
</feature>
<feature type="compositionally biased region" description="Basic and acidic residues" evidence="4">
    <location>
        <begin position="780"/>
        <end position="790"/>
    </location>
</feature>
<feature type="active site" description="Proton donor" evidence="1">
    <location>
        <position position="519"/>
    </location>
</feature>
<feature type="binding site" evidence="2">
    <location>
        <begin position="290"/>
        <end position="291"/>
    </location>
    <ligand>
        <name>3',5'-cyclic AMP</name>
        <dbReference type="ChEBI" id="CHEBI:58165"/>
    </ligand>
</feature>
<feature type="binding site" evidence="2">
    <location>
        <begin position="334"/>
        <end position="335"/>
    </location>
    <ligand>
        <name>3',5'-cyclic AMP</name>
        <dbReference type="ChEBI" id="CHEBI:58165"/>
    </ligand>
</feature>
<feature type="binding site" evidence="2">
    <location>
        <position position="368"/>
    </location>
    <ligand>
        <name>3',5'-cyclic AMP</name>
        <dbReference type="ChEBI" id="CHEBI:58165"/>
    </ligand>
</feature>
<feature type="binding site" evidence="2">
    <location>
        <position position="387"/>
    </location>
    <ligand>
        <name>3',5'-cyclic AMP</name>
        <dbReference type="ChEBI" id="CHEBI:58165"/>
    </ligand>
</feature>
<feature type="binding site" evidence="2">
    <location>
        <position position="519"/>
    </location>
    <ligand>
        <name>3',5'-cyclic AMP</name>
        <dbReference type="ChEBI" id="CHEBI:58165"/>
    </ligand>
</feature>
<feature type="binding site" evidence="2">
    <location>
        <position position="519"/>
    </location>
    <ligand>
        <name>3',5'-cyclic GMP</name>
        <dbReference type="ChEBI" id="CHEBI:57746"/>
    </ligand>
</feature>
<feature type="binding site" evidence="2">
    <location>
        <position position="523"/>
    </location>
    <ligand>
        <name>a divalent metal cation</name>
        <dbReference type="ChEBI" id="CHEBI:60240"/>
        <label>1</label>
    </ligand>
</feature>
<feature type="binding site" evidence="2">
    <location>
        <position position="557"/>
    </location>
    <ligand>
        <name>a divalent metal cation</name>
        <dbReference type="ChEBI" id="CHEBI:60240"/>
        <label>1</label>
    </ligand>
</feature>
<feature type="binding site" evidence="2">
    <location>
        <position position="558"/>
    </location>
    <ligand>
        <name>a divalent metal cation</name>
        <dbReference type="ChEBI" id="CHEBI:60240"/>
        <label>1</label>
    </ligand>
</feature>
<feature type="binding site" evidence="2">
    <location>
        <position position="558"/>
    </location>
    <ligand>
        <name>a divalent metal cation</name>
        <dbReference type="ChEBI" id="CHEBI:60240"/>
        <label>2</label>
    </ligand>
</feature>
<feature type="binding site" evidence="2">
    <location>
        <position position="668"/>
    </location>
    <ligand>
        <name>a divalent metal cation</name>
        <dbReference type="ChEBI" id="CHEBI:60240"/>
        <label>1</label>
    </ligand>
</feature>
<feature type="binding site" evidence="2">
    <location>
        <position position="720"/>
    </location>
    <ligand>
        <name>3',5'-cyclic AMP</name>
        <dbReference type="ChEBI" id="CHEBI:58165"/>
    </ligand>
</feature>
<feature type="binding site" evidence="2">
    <location>
        <position position="720"/>
    </location>
    <ligand>
        <name>3',5'-cyclic GMP</name>
        <dbReference type="ChEBI" id="CHEBI:57746"/>
    </ligand>
</feature>
<feature type="splice variant" id="VSP_035915" description="In isoform 4." evidence="10">
    <location>
        <begin position="1"/>
        <end position="60"/>
    </location>
</feature>
<feature type="splice variant" id="VSP_035916" description="In isoform 3." evidence="9">
    <original>MSNDSTEGTVGSCNATG</original>
    <variation>MEDGPSNNASCFRRLTECFLSPS</variation>
    <location>
        <begin position="1"/>
        <end position="17"/>
    </location>
</feature>
<feature type="splice variant" id="VSP_035917" description="In isoform 2." evidence="8">
    <original>MSNDSTEGTVGSCNAT</original>
    <variation>MEKLY</variation>
    <location>
        <begin position="1"/>
        <end position="16"/>
    </location>
</feature>
<feature type="splice variant" id="VSP_035918" description="In isoform 4." evidence="10">
    <original>EPSPKEVSR</original>
    <variation>MPGPGQ</variation>
    <location>
        <begin position="61"/>
        <end position="69"/>
    </location>
</feature>
<feature type="mutagenesis site" description="Decreased protein abundance; decreased 3',5'-cyclic-nucleotide phosphodiesterase activity." evidence="7">
    <original>Y</original>
    <variation>C</variation>
    <location>
        <position position="101"/>
    </location>
</feature>
<feature type="sequence conflict" description="In Ref. 3; BAC30292." evidence="11" ref="3">
    <original>P</original>
    <variation>Q</variation>
    <location>
        <position position="774"/>
    </location>
</feature>
<dbReference type="EC" id="3.1.4.17" evidence="5"/>
<dbReference type="EMBL" id="AF110507">
    <property type="protein sequence ID" value="AAD31544.1"/>
    <property type="molecule type" value="mRNA"/>
</dbReference>
<dbReference type="EMBL" id="AY360383">
    <property type="protein sequence ID" value="AAR12579.1"/>
    <property type="molecule type" value="mRNA"/>
</dbReference>
<dbReference type="EMBL" id="AK039249">
    <property type="protein sequence ID" value="BAC30292.1"/>
    <property type="molecule type" value="mRNA"/>
</dbReference>
<dbReference type="EMBL" id="AK162804">
    <property type="protein sequence ID" value="BAE37063.1"/>
    <property type="molecule type" value="mRNA"/>
</dbReference>
<dbReference type="EMBL" id="AK166310">
    <property type="protein sequence ID" value="BAE38696.1"/>
    <property type="molecule type" value="mRNA"/>
</dbReference>
<dbReference type="EMBL" id="CH466619">
    <property type="protein sequence ID" value="EDL02097.1"/>
    <property type="molecule type" value="Genomic_DNA"/>
</dbReference>
<dbReference type="EMBL" id="CH466619">
    <property type="protein sequence ID" value="EDL02099.1"/>
    <property type="molecule type" value="Genomic_DNA"/>
</dbReference>
<dbReference type="EMBL" id="BC113201">
    <property type="protein sequence ID" value="AAI13202.1"/>
    <property type="molecule type" value="mRNA"/>
</dbReference>
<dbReference type="CCDS" id="CCDS28384.1">
    <molecule id="Q8CA95-3"/>
</dbReference>
<dbReference type="CCDS" id="CCDS84274.1">
    <molecule id="Q8CA95-2"/>
</dbReference>
<dbReference type="RefSeq" id="NP_001277636.1">
    <property type="nucleotide sequence ID" value="NM_001290707.1"/>
</dbReference>
<dbReference type="RefSeq" id="NP_001334250.1">
    <molecule id="Q8CA95-2"/>
    <property type="nucleotide sequence ID" value="NM_001347321.1"/>
</dbReference>
<dbReference type="RefSeq" id="NP_035996.2">
    <molecule id="Q8CA95-3"/>
    <property type="nucleotide sequence ID" value="NM_011866.2"/>
</dbReference>
<dbReference type="RefSeq" id="XP_017172950.1">
    <property type="nucleotide sequence ID" value="XM_017317461.1"/>
</dbReference>
<dbReference type="RefSeq" id="XP_036016478.1">
    <molecule id="Q8CA95-1"/>
    <property type="nucleotide sequence ID" value="XM_036160585.1"/>
</dbReference>
<dbReference type="SMR" id="Q8CA95"/>
<dbReference type="BioGRID" id="204836">
    <property type="interactions" value="19"/>
</dbReference>
<dbReference type="CORUM" id="Q8CA95"/>
<dbReference type="FunCoup" id="Q8CA95">
    <property type="interactions" value="467"/>
</dbReference>
<dbReference type="STRING" id="10090.ENSMUSP00000086485"/>
<dbReference type="BindingDB" id="Q8CA95"/>
<dbReference type="ChEMBL" id="CHEMBL1795126"/>
<dbReference type="GlyGen" id="Q8CA95">
    <property type="glycosylation" value="3 sites, 1 N-linked glycan (1 site), 1 O-linked glycan (1 site)"/>
</dbReference>
<dbReference type="iPTMnet" id="Q8CA95"/>
<dbReference type="PhosphoSitePlus" id="Q8CA95"/>
<dbReference type="SwissPalm" id="Q8CA95"/>
<dbReference type="PaxDb" id="10090-ENSMUSP00000086485"/>
<dbReference type="PeptideAtlas" id="Q8CA95"/>
<dbReference type="ProteomicsDB" id="287982">
    <molecule id="Q8CA95-1"/>
</dbReference>
<dbReference type="ProteomicsDB" id="287983">
    <molecule id="Q8CA95-2"/>
</dbReference>
<dbReference type="ProteomicsDB" id="287984">
    <molecule id="Q8CA95-3"/>
</dbReference>
<dbReference type="ProteomicsDB" id="287985">
    <molecule id="Q8CA95-4"/>
</dbReference>
<dbReference type="Antibodypedia" id="33512">
    <property type="antibodies" value="270 antibodies from 27 providers"/>
</dbReference>
<dbReference type="DNASU" id="23984"/>
<dbReference type="Ensembl" id="ENSMUST00000089085.10">
    <molecule id="Q8CA95-3"/>
    <property type="protein sequence ID" value="ENSMUSP00000086485.3"/>
    <property type="gene ID" value="ENSMUSG00000023868.18"/>
</dbReference>
<dbReference type="Ensembl" id="ENSMUST00000115720.8">
    <molecule id="Q8CA95-2"/>
    <property type="protein sequence ID" value="ENSMUSP00000111385.2"/>
    <property type="gene ID" value="ENSMUSG00000023868.18"/>
</dbReference>
<dbReference type="Ensembl" id="ENSMUST00000149440.8">
    <molecule id="Q8CA95-4"/>
    <property type="protein sequence ID" value="ENSMUSP00000123216.2"/>
    <property type="gene ID" value="ENSMUSG00000023868.18"/>
</dbReference>
<dbReference type="GeneID" id="23984"/>
<dbReference type="KEGG" id="mmu:23984"/>
<dbReference type="UCSC" id="uc008ajr.1">
    <molecule id="Q8CA95-1"/>
    <property type="organism name" value="mouse"/>
</dbReference>
<dbReference type="UCSC" id="uc008ajs.1">
    <molecule id="Q8CA95-3"/>
    <property type="organism name" value="mouse"/>
</dbReference>
<dbReference type="UCSC" id="uc008aju.1">
    <molecule id="Q8CA95-2"/>
    <property type="organism name" value="mouse"/>
</dbReference>
<dbReference type="AGR" id="MGI:1345143"/>
<dbReference type="CTD" id="10846"/>
<dbReference type="MGI" id="MGI:1345143">
    <property type="gene designation" value="Pde10a"/>
</dbReference>
<dbReference type="VEuPathDB" id="HostDB:ENSMUSG00000023868"/>
<dbReference type="eggNOG" id="KOG3689">
    <property type="taxonomic scope" value="Eukaryota"/>
</dbReference>
<dbReference type="GeneTree" id="ENSGT00940000156543"/>
<dbReference type="InParanoid" id="Q8CA95"/>
<dbReference type="OMA" id="YNAKKWE"/>
<dbReference type="OrthoDB" id="546632at2759"/>
<dbReference type="TreeFam" id="TF316499"/>
<dbReference type="Reactome" id="R-MMU-418457">
    <property type="pathway name" value="cGMP effects"/>
</dbReference>
<dbReference type="Reactome" id="R-MMU-418555">
    <property type="pathway name" value="G alpha (s) signalling events"/>
</dbReference>
<dbReference type="SABIO-RK" id="Q8CA95"/>
<dbReference type="UniPathway" id="UPA00762">
    <property type="reaction ID" value="UER00747"/>
</dbReference>
<dbReference type="UniPathway" id="UPA00763">
    <property type="reaction ID" value="UER00748"/>
</dbReference>
<dbReference type="BioGRID-ORCS" id="23984">
    <property type="hits" value="1 hit in 76 CRISPR screens"/>
</dbReference>
<dbReference type="ChiTaRS" id="Pde10a">
    <property type="organism name" value="mouse"/>
</dbReference>
<dbReference type="PRO" id="PR:Q8CA95"/>
<dbReference type="Proteomes" id="UP000000589">
    <property type="component" value="Chromosome 17"/>
</dbReference>
<dbReference type="RNAct" id="Q8CA95">
    <property type="molecule type" value="protein"/>
</dbReference>
<dbReference type="Bgee" id="ENSMUSG00000023868">
    <property type="expression patterns" value="Expressed in caudate-putamen and 235 other cell types or tissues"/>
</dbReference>
<dbReference type="ExpressionAtlas" id="Q8CA95">
    <property type="expression patterns" value="baseline and differential"/>
</dbReference>
<dbReference type="GO" id="GO:0005829">
    <property type="term" value="C:cytosol"/>
    <property type="evidence" value="ECO:0007669"/>
    <property type="project" value="UniProtKB-SubCell"/>
</dbReference>
<dbReference type="GO" id="GO:0098978">
    <property type="term" value="C:glutamatergic synapse"/>
    <property type="evidence" value="ECO:0000314"/>
    <property type="project" value="SynGO"/>
</dbReference>
<dbReference type="GO" id="GO:0045202">
    <property type="term" value="C:synapse"/>
    <property type="evidence" value="ECO:0000314"/>
    <property type="project" value="SynGO"/>
</dbReference>
<dbReference type="GO" id="GO:0004118">
    <property type="term" value="F:3',5'-cGMP-stimulated cyclic-nucleotide phosphodiesterase activity"/>
    <property type="evidence" value="ECO:0000250"/>
    <property type="project" value="UniProtKB"/>
</dbReference>
<dbReference type="GO" id="GO:0004115">
    <property type="term" value="F:3',5'-cyclic-AMP phosphodiesterase activity"/>
    <property type="evidence" value="ECO:0007669"/>
    <property type="project" value="RHEA"/>
</dbReference>
<dbReference type="GO" id="GO:0047555">
    <property type="term" value="F:3',5'-cyclic-GMP phosphodiesterase activity"/>
    <property type="evidence" value="ECO:0007669"/>
    <property type="project" value="RHEA"/>
</dbReference>
<dbReference type="GO" id="GO:0004114">
    <property type="term" value="F:3',5'-cyclic-nucleotide phosphodiesterase activity"/>
    <property type="evidence" value="ECO:0000314"/>
    <property type="project" value="MGI"/>
</dbReference>
<dbReference type="GO" id="GO:0030552">
    <property type="term" value="F:cAMP binding"/>
    <property type="evidence" value="ECO:0000250"/>
    <property type="project" value="UniProtKB"/>
</dbReference>
<dbReference type="GO" id="GO:0030553">
    <property type="term" value="F:cGMP binding"/>
    <property type="evidence" value="ECO:0007669"/>
    <property type="project" value="UniProtKB-KW"/>
</dbReference>
<dbReference type="GO" id="GO:0046872">
    <property type="term" value="F:metal ion binding"/>
    <property type="evidence" value="ECO:0007669"/>
    <property type="project" value="UniProtKB-KW"/>
</dbReference>
<dbReference type="GO" id="GO:0006198">
    <property type="term" value="P:cAMP catabolic process"/>
    <property type="evidence" value="ECO:0007669"/>
    <property type="project" value="UniProtKB-UniPathway"/>
</dbReference>
<dbReference type="GO" id="GO:0046069">
    <property type="term" value="P:cGMP catabolic process"/>
    <property type="evidence" value="ECO:0007669"/>
    <property type="project" value="UniProtKB-UniPathway"/>
</dbReference>
<dbReference type="GO" id="GO:0106070">
    <property type="term" value="P:regulation of adenylate cyclase-activating G protein-coupled receptor signaling pathway"/>
    <property type="evidence" value="ECO:0000315"/>
    <property type="project" value="MGI"/>
</dbReference>
<dbReference type="GO" id="GO:0141161">
    <property type="term" value="P:regulation of cAMP/PKA signal transduction"/>
    <property type="evidence" value="ECO:0000315"/>
    <property type="project" value="MGI"/>
</dbReference>
<dbReference type="GO" id="GO:0007165">
    <property type="term" value="P:signal transduction"/>
    <property type="evidence" value="ECO:0007669"/>
    <property type="project" value="InterPro"/>
</dbReference>
<dbReference type="CDD" id="cd00077">
    <property type="entry name" value="HDc"/>
    <property type="match status" value="1"/>
</dbReference>
<dbReference type="FunFam" id="3.30.450.40:FF:000005">
    <property type="entry name" value="Phosphodiesterase"/>
    <property type="match status" value="1"/>
</dbReference>
<dbReference type="FunFam" id="3.30.450.40:FF:000011">
    <property type="entry name" value="Phosphodiesterase"/>
    <property type="match status" value="1"/>
</dbReference>
<dbReference type="FunFam" id="1.10.1300.10:FF:000007">
    <property type="entry name" value="Phosphodiesterase 10A"/>
    <property type="match status" value="1"/>
</dbReference>
<dbReference type="Gene3D" id="3.30.450.40">
    <property type="match status" value="2"/>
</dbReference>
<dbReference type="Gene3D" id="1.10.1300.10">
    <property type="entry name" value="3'5'-cyclic nucleotide phosphodiesterase, catalytic domain"/>
    <property type="match status" value="1"/>
</dbReference>
<dbReference type="InterPro" id="IPR003018">
    <property type="entry name" value="GAF"/>
</dbReference>
<dbReference type="InterPro" id="IPR029016">
    <property type="entry name" value="GAF-like_dom_sf"/>
</dbReference>
<dbReference type="InterPro" id="IPR003607">
    <property type="entry name" value="HD/PDEase_dom"/>
</dbReference>
<dbReference type="InterPro" id="IPR023088">
    <property type="entry name" value="PDEase"/>
</dbReference>
<dbReference type="InterPro" id="IPR002073">
    <property type="entry name" value="PDEase_catalytic_dom"/>
</dbReference>
<dbReference type="InterPro" id="IPR036971">
    <property type="entry name" value="PDEase_catalytic_dom_sf"/>
</dbReference>
<dbReference type="InterPro" id="IPR023174">
    <property type="entry name" value="PDEase_CS"/>
</dbReference>
<dbReference type="PANTHER" id="PTHR11347">
    <property type="entry name" value="CYCLIC NUCLEOTIDE PHOSPHODIESTERASE"/>
    <property type="match status" value="1"/>
</dbReference>
<dbReference type="Pfam" id="PF01590">
    <property type="entry name" value="GAF"/>
    <property type="match status" value="2"/>
</dbReference>
<dbReference type="Pfam" id="PF00233">
    <property type="entry name" value="PDEase_I"/>
    <property type="match status" value="1"/>
</dbReference>
<dbReference type="PRINTS" id="PR00387">
    <property type="entry name" value="PDIESTERASE1"/>
</dbReference>
<dbReference type="SMART" id="SM00065">
    <property type="entry name" value="GAF"/>
    <property type="match status" value="2"/>
</dbReference>
<dbReference type="SMART" id="SM00471">
    <property type="entry name" value="HDc"/>
    <property type="match status" value="1"/>
</dbReference>
<dbReference type="SUPFAM" id="SSF55781">
    <property type="entry name" value="GAF domain-like"/>
    <property type="match status" value="2"/>
</dbReference>
<dbReference type="SUPFAM" id="SSF109604">
    <property type="entry name" value="HD-domain/PDEase-like"/>
    <property type="match status" value="1"/>
</dbReference>
<dbReference type="PROSITE" id="PS00126">
    <property type="entry name" value="PDEASE_I_1"/>
    <property type="match status" value="1"/>
</dbReference>
<dbReference type="PROSITE" id="PS51845">
    <property type="entry name" value="PDEASE_I_2"/>
    <property type="match status" value="1"/>
</dbReference>
<reference key="1">
    <citation type="journal article" date="1999" name="Proc. Natl. Acad. Sci. U.S.A.">
        <title>Isolation and characterization of a dual-substrate phosphodiesterase gene family: PDE10A.</title>
        <authorList>
            <person name="Soderling S.H."/>
            <person name="Bayuga S.J."/>
            <person name="Beavo J.A."/>
        </authorList>
    </citation>
    <scope>NUCLEOTIDE SEQUENCE [MRNA] (ISOFORM 2)</scope>
    <scope>FUNCTION</scope>
    <scope>CATALYTIC ACTIVITY</scope>
    <scope>BIOPHYSICOCHEMICAL PROPERTIES</scope>
    <scope>TISSUE SPECIFICITY</scope>
    <source>
        <tissue>Testis</tissue>
    </source>
</reference>
<reference key="2">
    <citation type="journal article" date="2004" name="Neuroscience">
        <title>Striatal phosphodiesterase mRNA and protein levels are reduced in Huntington's disease transgenic mice prior to the onset of motor symptoms.</title>
        <authorList>
            <person name="Hebb A.L."/>
            <person name="Robertson H.A."/>
            <person name="Denovan-Wright E.M."/>
        </authorList>
    </citation>
    <scope>NUCLEOTIDE SEQUENCE [MRNA] (ISOFORM 3)</scope>
    <scope>FUNCTION</scope>
    <scope>INDUCTION</scope>
    <scope>TISSUE SPECIFICITY</scope>
    <source>
        <strain>C57BL/6 X CBA</strain>
        <tissue>Corpus striatum</tissue>
    </source>
</reference>
<reference key="3">
    <citation type="journal article" date="2005" name="Science">
        <title>The transcriptional landscape of the mammalian genome.</title>
        <authorList>
            <person name="Carninci P."/>
            <person name="Kasukawa T."/>
            <person name="Katayama S."/>
            <person name="Gough J."/>
            <person name="Frith M.C."/>
            <person name="Maeda N."/>
            <person name="Oyama R."/>
            <person name="Ravasi T."/>
            <person name="Lenhard B."/>
            <person name="Wells C."/>
            <person name="Kodzius R."/>
            <person name="Shimokawa K."/>
            <person name="Bajic V.B."/>
            <person name="Brenner S.E."/>
            <person name="Batalov S."/>
            <person name="Forrest A.R."/>
            <person name="Zavolan M."/>
            <person name="Davis M.J."/>
            <person name="Wilming L.G."/>
            <person name="Aidinis V."/>
            <person name="Allen J.E."/>
            <person name="Ambesi-Impiombato A."/>
            <person name="Apweiler R."/>
            <person name="Aturaliya R.N."/>
            <person name="Bailey T.L."/>
            <person name="Bansal M."/>
            <person name="Baxter L."/>
            <person name="Beisel K.W."/>
            <person name="Bersano T."/>
            <person name="Bono H."/>
            <person name="Chalk A.M."/>
            <person name="Chiu K.P."/>
            <person name="Choudhary V."/>
            <person name="Christoffels A."/>
            <person name="Clutterbuck D.R."/>
            <person name="Crowe M.L."/>
            <person name="Dalla E."/>
            <person name="Dalrymple B.P."/>
            <person name="de Bono B."/>
            <person name="Della Gatta G."/>
            <person name="di Bernardo D."/>
            <person name="Down T."/>
            <person name="Engstrom P."/>
            <person name="Fagiolini M."/>
            <person name="Faulkner G."/>
            <person name="Fletcher C.F."/>
            <person name="Fukushima T."/>
            <person name="Furuno M."/>
            <person name="Futaki S."/>
            <person name="Gariboldi M."/>
            <person name="Georgii-Hemming P."/>
            <person name="Gingeras T.R."/>
            <person name="Gojobori T."/>
            <person name="Green R.E."/>
            <person name="Gustincich S."/>
            <person name="Harbers M."/>
            <person name="Hayashi Y."/>
            <person name="Hensch T.K."/>
            <person name="Hirokawa N."/>
            <person name="Hill D."/>
            <person name="Huminiecki L."/>
            <person name="Iacono M."/>
            <person name="Ikeo K."/>
            <person name="Iwama A."/>
            <person name="Ishikawa T."/>
            <person name="Jakt M."/>
            <person name="Kanapin A."/>
            <person name="Katoh M."/>
            <person name="Kawasawa Y."/>
            <person name="Kelso J."/>
            <person name="Kitamura H."/>
            <person name="Kitano H."/>
            <person name="Kollias G."/>
            <person name="Krishnan S.P."/>
            <person name="Kruger A."/>
            <person name="Kummerfeld S.K."/>
            <person name="Kurochkin I.V."/>
            <person name="Lareau L.F."/>
            <person name="Lazarevic D."/>
            <person name="Lipovich L."/>
            <person name="Liu J."/>
            <person name="Liuni S."/>
            <person name="McWilliam S."/>
            <person name="Madan Babu M."/>
            <person name="Madera M."/>
            <person name="Marchionni L."/>
            <person name="Matsuda H."/>
            <person name="Matsuzawa S."/>
            <person name="Miki H."/>
            <person name="Mignone F."/>
            <person name="Miyake S."/>
            <person name="Morris K."/>
            <person name="Mottagui-Tabar S."/>
            <person name="Mulder N."/>
            <person name="Nakano N."/>
            <person name="Nakauchi H."/>
            <person name="Ng P."/>
            <person name="Nilsson R."/>
            <person name="Nishiguchi S."/>
            <person name="Nishikawa S."/>
            <person name="Nori F."/>
            <person name="Ohara O."/>
            <person name="Okazaki Y."/>
            <person name="Orlando V."/>
            <person name="Pang K.C."/>
            <person name="Pavan W.J."/>
            <person name="Pavesi G."/>
            <person name="Pesole G."/>
            <person name="Petrovsky N."/>
            <person name="Piazza S."/>
            <person name="Reed J."/>
            <person name="Reid J.F."/>
            <person name="Ring B.Z."/>
            <person name="Ringwald M."/>
            <person name="Rost B."/>
            <person name="Ruan Y."/>
            <person name="Salzberg S.L."/>
            <person name="Sandelin A."/>
            <person name="Schneider C."/>
            <person name="Schoenbach C."/>
            <person name="Sekiguchi K."/>
            <person name="Semple C.A."/>
            <person name="Seno S."/>
            <person name="Sessa L."/>
            <person name="Sheng Y."/>
            <person name="Shibata Y."/>
            <person name="Shimada H."/>
            <person name="Shimada K."/>
            <person name="Silva D."/>
            <person name="Sinclair B."/>
            <person name="Sperling S."/>
            <person name="Stupka E."/>
            <person name="Sugiura K."/>
            <person name="Sultana R."/>
            <person name="Takenaka Y."/>
            <person name="Taki K."/>
            <person name="Tammoja K."/>
            <person name="Tan S.L."/>
            <person name="Tang S."/>
            <person name="Taylor M.S."/>
            <person name="Tegner J."/>
            <person name="Teichmann S.A."/>
            <person name="Ueda H.R."/>
            <person name="van Nimwegen E."/>
            <person name="Verardo R."/>
            <person name="Wei C.L."/>
            <person name="Yagi K."/>
            <person name="Yamanishi H."/>
            <person name="Zabarovsky E."/>
            <person name="Zhu S."/>
            <person name="Zimmer A."/>
            <person name="Hide W."/>
            <person name="Bult C."/>
            <person name="Grimmond S.M."/>
            <person name="Teasdale R.D."/>
            <person name="Liu E.T."/>
            <person name="Brusic V."/>
            <person name="Quackenbush J."/>
            <person name="Wahlestedt C."/>
            <person name="Mattick J.S."/>
            <person name="Hume D.A."/>
            <person name="Kai C."/>
            <person name="Sasaki D."/>
            <person name="Tomaru Y."/>
            <person name="Fukuda S."/>
            <person name="Kanamori-Katayama M."/>
            <person name="Suzuki M."/>
            <person name="Aoki J."/>
            <person name="Arakawa T."/>
            <person name="Iida J."/>
            <person name="Imamura K."/>
            <person name="Itoh M."/>
            <person name="Kato T."/>
            <person name="Kawaji H."/>
            <person name="Kawagashira N."/>
            <person name="Kawashima T."/>
            <person name="Kojima M."/>
            <person name="Kondo S."/>
            <person name="Konno H."/>
            <person name="Nakano K."/>
            <person name="Ninomiya N."/>
            <person name="Nishio T."/>
            <person name="Okada M."/>
            <person name="Plessy C."/>
            <person name="Shibata K."/>
            <person name="Shiraki T."/>
            <person name="Suzuki S."/>
            <person name="Tagami M."/>
            <person name="Waki K."/>
            <person name="Watahiki A."/>
            <person name="Okamura-Oho Y."/>
            <person name="Suzuki H."/>
            <person name="Kawai J."/>
            <person name="Hayashizaki Y."/>
        </authorList>
    </citation>
    <scope>NUCLEOTIDE SEQUENCE [LARGE SCALE MRNA] (ISOFORMS 1 AND 4)</scope>
    <source>
        <strain>C57BL/6J</strain>
        <tissue>Mammary gland</tissue>
        <tissue>Spinal cord</tissue>
        <tissue>Thymus</tissue>
    </source>
</reference>
<reference key="4">
    <citation type="submission" date="2005-09" db="EMBL/GenBank/DDBJ databases">
        <authorList>
            <person name="Mural R.J."/>
            <person name="Adams M.D."/>
            <person name="Myers E.W."/>
            <person name="Smith H.O."/>
            <person name="Venter J.C."/>
        </authorList>
    </citation>
    <scope>NUCLEOTIDE SEQUENCE [LARGE SCALE GENOMIC DNA]</scope>
</reference>
<reference key="5">
    <citation type="journal article" date="2004" name="Genome Res.">
        <title>The status, quality, and expansion of the NIH full-length cDNA project: the Mammalian Gene Collection (MGC).</title>
        <authorList>
            <consortium name="The MGC Project Team"/>
        </authorList>
    </citation>
    <scope>NUCLEOTIDE SEQUENCE [LARGE SCALE MRNA] (ISOFORM 1)</scope>
</reference>
<reference key="6">
    <citation type="journal article" date="2010" name="Cell">
        <title>A tissue-specific atlas of mouse protein phosphorylation and expression.</title>
        <authorList>
            <person name="Huttlin E.L."/>
            <person name="Jedrychowski M.P."/>
            <person name="Elias J.E."/>
            <person name="Goswami T."/>
            <person name="Rad R."/>
            <person name="Beausoleil S.A."/>
            <person name="Villen J."/>
            <person name="Haas W."/>
            <person name="Sowa M.E."/>
            <person name="Gygi S.P."/>
        </authorList>
    </citation>
    <scope>IDENTIFICATION BY MASS SPECTROMETRY [LARGE SCALE ANALYSIS]</scope>
    <source>
        <tissue>Brain</tissue>
        <tissue>Testis</tissue>
    </source>
</reference>
<reference key="7">
    <citation type="journal article" date="2016" name="Am. J. Hum. Genet.">
        <title>Biallelic mutations in PDE10A Lead to loss of striatal PDE10A and a hyperkinetic movement disorder with onset in infancy.</title>
        <authorList>
            <person name="Diggle C.P."/>
            <person name="Sukoff Rizzo S.J."/>
            <person name="Popiolek M."/>
            <person name="Hinttala R."/>
            <person name="Schuelke J.P."/>
            <person name="Kurian M.A."/>
            <person name="Carr I.M."/>
            <person name="Markham A.F."/>
            <person name="Bonthron D.T."/>
            <person name="Watson C."/>
            <person name="Sharif S.M."/>
            <person name="Reinhart V."/>
            <person name="James L.C."/>
            <person name="Vanase-Frawley M.A."/>
            <person name="Charych E."/>
            <person name="Allen M."/>
            <person name="Harms J."/>
            <person name="Schmidt C.J."/>
            <person name="Ng J."/>
            <person name="Pysden K."/>
            <person name="Strick C."/>
            <person name="Vieira P."/>
            <person name="Mankinen K."/>
            <person name="Kokkonen H."/>
            <person name="Kallioinen M."/>
            <person name="Sormunen R."/>
            <person name="Rinne J.O."/>
            <person name="Johansson J."/>
            <person name="Alakurtti K."/>
            <person name="Huilaja L."/>
            <person name="Hurskainen T."/>
            <person name="Tasanen K."/>
            <person name="Anttila E."/>
            <person name="Marques T.R."/>
            <person name="Howes O."/>
            <person name="Politis M."/>
            <person name="Fahiminiya S."/>
            <person name="Nguyen K.Q."/>
            <person name="Majewski J."/>
            <person name="Uusimaa J."/>
            <person name="Sheridan E."/>
            <person name="Brandon N.J."/>
        </authorList>
    </citation>
    <scope>FUNCTION</scope>
    <scope>MUTAGENESIS OF TYR-101</scope>
</reference>
<evidence type="ECO:0000250" key="1">
    <source>
        <dbReference type="UniProtKB" id="O76083"/>
    </source>
</evidence>
<evidence type="ECO:0000250" key="2">
    <source>
        <dbReference type="UniProtKB" id="Q9Y233"/>
    </source>
</evidence>
<evidence type="ECO:0000255" key="3">
    <source>
        <dbReference type="PROSITE-ProRule" id="PRU01192"/>
    </source>
</evidence>
<evidence type="ECO:0000256" key="4">
    <source>
        <dbReference type="SAM" id="MobiDB-lite"/>
    </source>
</evidence>
<evidence type="ECO:0000269" key="5">
    <source>
    </source>
</evidence>
<evidence type="ECO:0000269" key="6">
    <source>
    </source>
</evidence>
<evidence type="ECO:0000269" key="7">
    <source>
    </source>
</evidence>
<evidence type="ECO:0000303" key="8">
    <source>
    </source>
</evidence>
<evidence type="ECO:0000303" key="9">
    <source>
    </source>
</evidence>
<evidence type="ECO:0000303" key="10">
    <source>
    </source>
</evidence>
<evidence type="ECO:0000305" key="11"/>
<protein>
    <recommendedName>
        <fullName>cAMP and cAMP-inhibited cGMP 3',5'-cyclic phosphodiesterase 10A</fullName>
        <ecNumber evidence="5">3.1.4.17</ecNumber>
    </recommendedName>
</protein>
<name>PDE10_MOUSE</name>
<accession>Q8CA95</accession>
<accession>Q3TLU6</accession>
<accession>Q3TRG6</accession>
<accession>Q69C21</accession>
<accession>Q9WVI1</accession>
<sequence length="790" mass="89408">MSNDSTEGTVGSCNATGLTDEKVKAYLSLHPQVLDEFVSESVSAETVEKWLKRKTNKAKDEPSPKEVSRYQDTNMQGVVYELNSYIEQRLDTGGDNHLLLYELSSIIRIATKADGFALYFLGECNNSLCVFIPPGMKEGQPRLIPAGPITQGTTISAYVAKSRKTLLVEDILGDERFPRGTGLESGTRIQSVLCLPIVTAIGDLIGILELYRHWGKEAFCLSHQEVATANLAWASVAIHQVQVCRGLAKQTELNDFLLDVSKTYFDNIVAIDSLLEHIMIYAKNLVNADRCALFQVDHKNKELYSDLFDIGEEKEGKPIFKKTKEIRFSIEKGIAGQVARTGEVLNIPDAYADPRFNREVDLYTGYTTRNILCMPIVSRGSVIGVVQMVNKISGSAFSKTDENNFKMFAVFCALALHCANMYHRIRHSECIYRVTMEKLSYHSICTSEEWQGLMRFNLPARICRDIELFHFDIGPFENMWPGIFVYMIHRSCGTSCFELEKLCRFIMSVKKNYRRVPYHNWKHAVTVAHCMYAILQNNNGLFTDLERKGLLIACLCHDLDHRGFSNSYLQKFDHPLAALYSTSTMEQHHFSQTVSILQLEGHNIFSTLSSSEYEQVLEIIRKAIIATDLALYFGNRKQLEEMYQTGSLNLHNQSHRDRVIGLMMTACDLCSVTKLWPVTKLTANDIYAEFWAEGDEMKKLGIQPIPMMDRDKRDEVPQGQLGFYNAVAIPCYTTLTQILPPTEPLLKACRDNLNQWEKVIRGEETAMWISGPGPAPSKSTPEKLNVKVED</sequence>
<comment type="function">
    <text evidence="5 6 7">Plays a role in signal transduction by regulating the intracellular concentration of cyclic nucleotides (PubMed:10359840). Can hydrolyze both cAMP and cGMP, but has higher affinity for cAMP and is more efficient with cAMP as substrate (PubMed:10359840). May play a critical role in regulating cAMP and cGMP levels in the striatum, a region of the brain that contributes to the control of movement and cognition (PubMed:10359840, PubMed:14751289, PubMed:27058446).</text>
</comment>
<comment type="catalytic activity">
    <reaction evidence="5">
        <text>a nucleoside 3',5'-cyclic phosphate + H2O = a nucleoside 5'-phosphate + H(+)</text>
        <dbReference type="Rhea" id="RHEA:14653"/>
        <dbReference type="ChEBI" id="CHEBI:15377"/>
        <dbReference type="ChEBI" id="CHEBI:15378"/>
        <dbReference type="ChEBI" id="CHEBI:57867"/>
        <dbReference type="ChEBI" id="CHEBI:58464"/>
        <dbReference type="EC" id="3.1.4.17"/>
    </reaction>
</comment>
<comment type="catalytic activity">
    <reaction evidence="5">
        <text>3',5'-cyclic AMP + H2O = AMP + H(+)</text>
        <dbReference type="Rhea" id="RHEA:25277"/>
        <dbReference type="ChEBI" id="CHEBI:15377"/>
        <dbReference type="ChEBI" id="CHEBI:15378"/>
        <dbReference type="ChEBI" id="CHEBI:58165"/>
        <dbReference type="ChEBI" id="CHEBI:456215"/>
    </reaction>
</comment>
<comment type="catalytic activity">
    <reaction evidence="5">
        <text>3',5'-cyclic GMP + H2O = GMP + H(+)</text>
        <dbReference type="Rhea" id="RHEA:16957"/>
        <dbReference type="ChEBI" id="CHEBI:15377"/>
        <dbReference type="ChEBI" id="CHEBI:15378"/>
        <dbReference type="ChEBI" id="CHEBI:57746"/>
        <dbReference type="ChEBI" id="CHEBI:58115"/>
    </reaction>
</comment>
<comment type="cofactor">
    <cofactor evidence="2">
        <name>a divalent metal cation</name>
        <dbReference type="ChEBI" id="CHEBI:60240"/>
    </cofactor>
    <text evidence="2">Binds 2 divalent metal cations per subunit. Site 1 may preferentially bind zinc ions, while site 2 has a preference for magnesium and/or manganese ions.</text>
</comment>
<comment type="biophysicochemical properties">
    <kinetics>
        <KM evidence="5">0.05 uM for cAMP</KM>
        <KM evidence="5">3 uM for cGMP</KM>
    </kinetics>
</comment>
<comment type="pathway">
    <text evidence="5">Purine metabolism; 3',5'-cyclic AMP degradation; AMP from 3',5'-cyclic AMP: step 1/1.</text>
</comment>
<comment type="pathway">
    <text evidence="5">Purine metabolism; 3',5'-cyclic GMP degradation; GMP from 3',5'-cyclic GMP: step 1/1.</text>
</comment>
<comment type="subunit">
    <text evidence="2">Homodimer.</text>
</comment>
<comment type="subcellular location">
    <subcellularLocation>
        <location evidence="2">Cytoplasm</location>
        <location evidence="2">Cytosol</location>
    </subcellularLocation>
</comment>
<comment type="alternative products">
    <event type="alternative splicing"/>
    <isoform>
        <id>Q8CA95-1</id>
        <name>1</name>
        <sequence type="displayed"/>
    </isoform>
    <isoform>
        <id>Q8CA95-2</id>
        <name>2</name>
        <sequence type="described" ref="VSP_035917"/>
    </isoform>
    <isoform>
        <id>Q8CA95-3</id>
        <name>3</name>
        <sequence type="described" ref="VSP_035916"/>
    </isoform>
    <isoform>
        <id>Q8CA95-4</id>
        <name>4</name>
        <sequence type="described" ref="VSP_035915 VSP_035918"/>
    </isoform>
</comment>
<comment type="tissue specificity">
    <text evidence="5 6">Detected in striatum (at protein level). Detected in testis and brain.</text>
</comment>
<comment type="induction">
    <text evidence="6">Down-regulated by the expression of a huntingtin (HD) gene with an expanded polyglutamine repeat prior to the onset of neurological symptoms related to Huntington disease.</text>
</comment>
<comment type="domain">
    <text evidence="2">The tandem GAF domains bind cAMP, and regulate enzyme activity. The binding of cAMP stimulates enzyme activity (By similarity).</text>
</comment>
<comment type="domain">
    <text evidence="2">Composed of a C-terminal catalytic domain containing two divalent metal sites and an N-terminal regulatory domain which contains one cyclic nucleotide-binding region.</text>
</comment>
<comment type="similarity">
    <text evidence="11">Belongs to the cyclic nucleotide phosphodiesterase family.</text>
</comment>
<proteinExistence type="evidence at protein level"/>